<dbReference type="EMBL" id="CP000848">
    <property type="protein sequence ID" value="ABV76421.1"/>
    <property type="molecule type" value="Genomic_DNA"/>
</dbReference>
<dbReference type="RefSeq" id="WP_012150994.1">
    <property type="nucleotide sequence ID" value="NZ_CP121767.1"/>
</dbReference>
<dbReference type="SMR" id="A8GSP6"/>
<dbReference type="GeneID" id="79937527"/>
<dbReference type="KEGG" id="rri:A1G_04605"/>
<dbReference type="HOGENOM" id="CLU_070525_0_2_5"/>
<dbReference type="Proteomes" id="UP000006832">
    <property type="component" value="Chromosome"/>
</dbReference>
<dbReference type="GO" id="GO:0005829">
    <property type="term" value="C:cytosol"/>
    <property type="evidence" value="ECO:0007669"/>
    <property type="project" value="TreeGrafter"/>
</dbReference>
<dbReference type="GO" id="GO:0000028">
    <property type="term" value="P:ribosomal small subunit assembly"/>
    <property type="evidence" value="ECO:0007669"/>
    <property type="project" value="TreeGrafter"/>
</dbReference>
<dbReference type="GO" id="GO:0006412">
    <property type="term" value="P:translation"/>
    <property type="evidence" value="ECO:0007669"/>
    <property type="project" value="TreeGrafter"/>
</dbReference>
<dbReference type="CDD" id="cd01734">
    <property type="entry name" value="YlxS_C"/>
    <property type="match status" value="1"/>
</dbReference>
<dbReference type="Gene3D" id="2.30.30.180">
    <property type="entry name" value="Ribosome maturation factor RimP, C-terminal domain"/>
    <property type="match status" value="1"/>
</dbReference>
<dbReference type="Gene3D" id="3.30.300.70">
    <property type="entry name" value="RimP-like superfamily, N-terminal"/>
    <property type="match status" value="1"/>
</dbReference>
<dbReference type="HAMAP" id="MF_01077">
    <property type="entry name" value="RimP"/>
    <property type="match status" value="1"/>
</dbReference>
<dbReference type="InterPro" id="IPR003728">
    <property type="entry name" value="Ribosome_maturation_RimP"/>
</dbReference>
<dbReference type="InterPro" id="IPR028998">
    <property type="entry name" value="RimP_C"/>
</dbReference>
<dbReference type="InterPro" id="IPR036847">
    <property type="entry name" value="RimP_C_sf"/>
</dbReference>
<dbReference type="InterPro" id="IPR028989">
    <property type="entry name" value="RimP_N"/>
</dbReference>
<dbReference type="InterPro" id="IPR035956">
    <property type="entry name" value="RimP_N_sf"/>
</dbReference>
<dbReference type="NCBIfam" id="NF000937">
    <property type="entry name" value="PRK00092.4-3"/>
    <property type="match status" value="1"/>
</dbReference>
<dbReference type="PANTHER" id="PTHR33867">
    <property type="entry name" value="RIBOSOME MATURATION FACTOR RIMP"/>
    <property type="match status" value="1"/>
</dbReference>
<dbReference type="PANTHER" id="PTHR33867:SF1">
    <property type="entry name" value="RIBOSOME MATURATION FACTOR RIMP"/>
    <property type="match status" value="1"/>
</dbReference>
<dbReference type="Pfam" id="PF17384">
    <property type="entry name" value="DUF150_C"/>
    <property type="match status" value="1"/>
</dbReference>
<dbReference type="Pfam" id="PF02576">
    <property type="entry name" value="RimP_N"/>
    <property type="match status" value="1"/>
</dbReference>
<dbReference type="SUPFAM" id="SSF74942">
    <property type="entry name" value="YhbC-like, C-terminal domain"/>
    <property type="match status" value="1"/>
</dbReference>
<dbReference type="SUPFAM" id="SSF75420">
    <property type="entry name" value="YhbC-like, N-terminal domain"/>
    <property type="match status" value="1"/>
</dbReference>
<gene>
    <name evidence="1" type="primary">rimP</name>
    <name type="ordered locus">A1G_04605</name>
</gene>
<comment type="function">
    <text evidence="1">Required for maturation of 30S ribosomal subunits.</text>
</comment>
<comment type="subcellular location">
    <subcellularLocation>
        <location evidence="1">Cytoplasm</location>
    </subcellularLocation>
</comment>
<comment type="similarity">
    <text evidence="1">Belongs to the RimP family.</text>
</comment>
<protein>
    <recommendedName>
        <fullName evidence="1">Ribosome maturation factor RimP</fullName>
    </recommendedName>
</protein>
<accession>A8GSP6</accession>
<proteinExistence type="inferred from homology"/>
<name>RIMP_RICRS</name>
<evidence type="ECO:0000255" key="1">
    <source>
        <dbReference type="HAMAP-Rule" id="MF_01077"/>
    </source>
</evidence>
<reference key="1">
    <citation type="submission" date="2007-09" db="EMBL/GenBank/DDBJ databases">
        <title>Complete genome sequence of Rickettsia rickettsii.</title>
        <authorList>
            <person name="Madan A."/>
            <person name="Fahey J."/>
            <person name="Helton E."/>
            <person name="Ketteman M."/>
            <person name="Madan A."/>
            <person name="Rodrigues S."/>
            <person name="Sanchez A."/>
            <person name="Dasch G."/>
            <person name="Eremeeva M."/>
        </authorList>
    </citation>
    <scope>NUCLEOTIDE SEQUENCE [LARGE SCALE GENOMIC DNA]</scope>
    <source>
        <strain>Sheila Smith</strain>
    </source>
</reference>
<feature type="chain" id="PRO_1000064761" description="Ribosome maturation factor RimP">
    <location>
        <begin position="1"/>
        <end position="161"/>
    </location>
</feature>
<sequence length="161" mass="18469">MQTIEQQITNVIEESLTDMGFELVLVKFKGVNPKVVEILIDSLNSEKVSVEDCTKASRTISAILDVEDLIEAAYSLEVASSGLERPLVKFENYNRFLEREVKIKLKELLNGKTRYQGKIIKAENNKIYLKCEEQEVLIDYDLIKNANLVLTEEVFKKLLKQ</sequence>
<organism>
    <name type="scientific">Rickettsia rickettsii (strain Sheila Smith)</name>
    <dbReference type="NCBI Taxonomy" id="392021"/>
    <lineage>
        <taxon>Bacteria</taxon>
        <taxon>Pseudomonadati</taxon>
        <taxon>Pseudomonadota</taxon>
        <taxon>Alphaproteobacteria</taxon>
        <taxon>Rickettsiales</taxon>
        <taxon>Rickettsiaceae</taxon>
        <taxon>Rickettsieae</taxon>
        <taxon>Rickettsia</taxon>
        <taxon>spotted fever group</taxon>
    </lineage>
</organism>
<keyword id="KW-0963">Cytoplasm</keyword>
<keyword id="KW-0690">Ribosome biogenesis</keyword>